<proteinExistence type="inferred from homology"/>
<name>YIDD_NOCFA</name>
<organism>
    <name type="scientific">Nocardia farcinica (strain IFM 10152)</name>
    <dbReference type="NCBI Taxonomy" id="247156"/>
    <lineage>
        <taxon>Bacteria</taxon>
        <taxon>Bacillati</taxon>
        <taxon>Actinomycetota</taxon>
        <taxon>Actinomycetes</taxon>
        <taxon>Mycobacteriales</taxon>
        <taxon>Nocardiaceae</taxon>
        <taxon>Nocardia</taxon>
    </lineage>
</organism>
<feature type="chain" id="PRO_0000253134" description="Putative membrane protein insertion efficiency factor">
    <location>
        <begin position="1"/>
        <end position="118"/>
    </location>
</feature>
<feature type="region of interest" description="Disordered" evidence="2">
    <location>
        <begin position="76"/>
        <end position="118"/>
    </location>
</feature>
<feature type="compositionally biased region" description="Low complexity" evidence="2">
    <location>
        <begin position="91"/>
        <end position="101"/>
    </location>
</feature>
<sequence>MRSAAAALHRLPARALIFLIELYRTYVSPTRMPVCRFTPTCSEYAVTALRTRGLVVGLGLTAVRLAKCAPWHPGGWDPVPQRRPRRRDAAAADAAMSAPHACKGSPHAVVGDTNDGST</sequence>
<gene>
    <name type="ordered locus">NFA_56710</name>
</gene>
<evidence type="ECO:0000255" key="1">
    <source>
        <dbReference type="HAMAP-Rule" id="MF_00386"/>
    </source>
</evidence>
<evidence type="ECO:0000256" key="2">
    <source>
        <dbReference type="SAM" id="MobiDB-lite"/>
    </source>
</evidence>
<reference key="1">
    <citation type="journal article" date="2004" name="Proc. Natl. Acad. Sci. U.S.A.">
        <title>The complete genomic sequence of Nocardia farcinica IFM 10152.</title>
        <authorList>
            <person name="Ishikawa J."/>
            <person name="Yamashita A."/>
            <person name="Mikami Y."/>
            <person name="Hoshino Y."/>
            <person name="Kurita H."/>
            <person name="Hotta K."/>
            <person name="Shiba T."/>
            <person name="Hattori M."/>
        </authorList>
    </citation>
    <scope>NUCLEOTIDE SEQUENCE [LARGE SCALE GENOMIC DNA]</scope>
    <source>
        <strain>IFM 10152</strain>
    </source>
</reference>
<keyword id="KW-1003">Cell membrane</keyword>
<keyword id="KW-0472">Membrane</keyword>
<keyword id="KW-1185">Reference proteome</keyword>
<comment type="function">
    <text evidence="1">Could be involved in insertion of integral membrane proteins into the membrane.</text>
</comment>
<comment type="subcellular location">
    <subcellularLocation>
        <location evidence="1">Cell membrane</location>
        <topology evidence="1">Peripheral membrane protein</topology>
        <orientation evidence="1">Cytoplasmic side</orientation>
    </subcellularLocation>
</comment>
<comment type="similarity">
    <text evidence="1">Belongs to the UPF0161 family.</text>
</comment>
<dbReference type="EMBL" id="AP006618">
    <property type="protein sequence ID" value="BAD60523.1"/>
    <property type="molecule type" value="Genomic_DNA"/>
</dbReference>
<dbReference type="STRING" id="247156.NFA_56710"/>
<dbReference type="GeneID" id="61136234"/>
<dbReference type="KEGG" id="nfa:NFA_56710"/>
<dbReference type="eggNOG" id="COG0759">
    <property type="taxonomic scope" value="Bacteria"/>
</dbReference>
<dbReference type="HOGENOM" id="CLU_144811_2_1_11"/>
<dbReference type="OrthoDB" id="9801753at2"/>
<dbReference type="Proteomes" id="UP000006820">
    <property type="component" value="Chromosome"/>
</dbReference>
<dbReference type="GO" id="GO:0005886">
    <property type="term" value="C:plasma membrane"/>
    <property type="evidence" value="ECO:0007669"/>
    <property type="project" value="UniProtKB-SubCell"/>
</dbReference>
<dbReference type="HAMAP" id="MF_00386">
    <property type="entry name" value="UPF0161_YidD"/>
    <property type="match status" value="1"/>
</dbReference>
<dbReference type="InterPro" id="IPR002696">
    <property type="entry name" value="Membr_insert_effic_factor_YidD"/>
</dbReference>
<dbReference type="NCBIfam" id="TIGR00278">
    <property type="entry name" value="membrane protein insertion efficiency factor YidD"/>
    <property type="match status" value="1"/>
</dbReference>
<dbReference type="PANTHER" id="PTHR33383">
    <property type="entry name" value="MEMBRANE PROTEIN INSERTION EFFICIENCY FACTOR-RELATED"/>
    <property type="match status" value="1"/>
</dbReference>
<dbReference type="PANTHER" id="PTHR33383:SF1">
    <property type="entry name" value="MEMBRANE PROTEIN INSERTION EFFICIENCY FACTOR-RELATED"/>
    <property type="match status" value="1"/>
</dbReference>
<dbReference type="Pfam" id="PF01809">
    <property type="entry name" value="YidD"/>
    <property type="match status" value="1"/>
</dbReference>
<dbReference type="SMART" id="SM01234">
    <property type="entry name" value="Haemolytic"/>
    <property type="match status" value="1"/>
</dbReference>
<protein>
    <recommendedName>
        <fullName evidence="1">Putative membrane protein insertion efficiency factor</fullName>
    </recommendedName>
</protein>
<accession>Q5YMR8</accession>